<comment type="function">
    <text evidence="1">Catalyzes the transfer of endogenously produced octanoic acid from octanoyl-acyl-carrier-protein onto the lipoyl domains of lipoate-dependent enzymes. Lipoyl-ACP can also act as a substrate although octanoyl-ACP is likely to be the physiological substrate.</text>
</comment>
<comment type="catalytic activity">
    <reaction evidence="1">
        <text>octanoyl-[ACP] + L-lysyl-[protein] = N(6)-octanoyl-L-lysyl-[protein] + holo-[ACP] + H(+)</text>
        <dbReference type="Rhea" id="RHEA:17665"/>
        <dbReference type="Rhea" id="RHEA-COMP:9636"/>
        <dbReference type="Rhea" id="RHEA-COMP:9685"/>
        <dbReference type="Rhea" id="RHEA-COMP:9752"/>
        <dbReference type="Rhea" id="RHEA-COMP:9928"/>
        <dbReference type="ChEBI" id="CHEBI:15378"/>
        <dbReference type="ChEBI" id="CHEBI:29969"/>
        <dbReference type="ChEBI" id="CHEBI:64479"/>
        <dbReference type="ChEBI" id="CHEBI:78463"/>
        <dbReference type="ChEBI" id="CHEBI:78809"/>
        <dbReference type="EC" id="2.3.1.181"/>
    </reaction>
</comment>
<comment type="pathway">
    <text evidence="1">Protein modification; protein lipoylation via endogenous pathway; protein N(6)-(lipoyl)lysine from octanoyl-[acyl-carrier-protein]: step 1/2.</text>
</comment>
<comment type="subcellular location">
    <subcellularLocation>
        <location evidence="1">Cytoplasm</location>
    </subcellularLocation>
</comment>
<comment type="miscellaneous">
    <text evidence="1">In the reaction, the free carboxyl group of octanoic acid is attached via an amide linkage to the epsilon-amino group of a specific lysine residue of lipoyl domains of lipoate-dependent enzymes.</text>
</comment>
<comment type="similarity">
    <text evidence="1">Belongs to the LipB family.</text>
</comment>
<sequence>MLAFEHHGVVPYEEAWARQRELHALRVADEIPDTCLLLEHPPVYTAGKRTEDFERPTDGTPVIAVDRGGRITWHGPGQLVGYPIVKLPMPIDAVGHVRRIEQALIAVCADLGVTAVRVPGRSGVWITSPGAPDRKIAAIGVRISRCTTMHGFALNCNPDLSWFRRIVPCGLPDAEVTSLSVELGRNVTVAEVRPLVVARLTEFLLPARPTDRVPTPQSAAN</sequence>
<keyword id="KW-0012">Acyltransferase</keyword>
<keyword id="KW-0963">Cytoplasm</keyword>
<keyword id="KW-1185">Reference proteome</keyword>
<keyword id="KW-0808">Transferase</keyword>
<dbReference type="EC" id="2.3.1.181" evidence="1"/>
<dbReference type="EMBL" id="CP000481">
    <property type="protein sequence ID" value="ABK52700.1"/>
    <property type="molecule type" value="Genomic_DNA"/>
</dbReference>
<dbReference type="RefSeq" id="WP_011719763.1">
    <property type="nucleotide sequence ID" value="NC_008578.1"/>
</dbReference>
<dbReference type="SMR" id="A0LTE0"/>
<dbReference type="FunCoup" id="A0LTE0">
    <property type="interactions" value="241"/>
</dbReference>
<dbReference type="STRING" id="351607.Acel_0927"/>
<dbReference type="KEGG" id="ace:Acel_0927"/>
<dbReference type="eggNOG" id="COG0321">
    <property type="taxonomic scope" value="Bacteria"/>
</dbReference>
<dbReference type="HOGENOM" id="CLU_035168_2_1_11"/>
<dbReference type="InParanoid" id="A0LTE0"/>
<dbReference type="OrthoDB" id="9787061at2"/>
<dbReference type="UniPathway" id="UPA00538">
    <property type="reaction ID" value="UER00592"/>
</dbReference>
<dbReference type="Proteomes" id="UP000008221">
    <property type="component" value="Chromosome"/>
</dbReference>
<dbReference type="GO" id="GO:0005737">
    <property type="term" value="C:cytoplasm"/>
    <property type="evidence" value="ECO:0007669"/>
    <property type="project" value="UniProtKB-SubCell"/>
</dbReference>
<dbReference type="GO" id="GO:0033819">
    <property type="term" value="F:lipoyl(octanoyl) transferase activity"/>
    <property type="evidence" value="ECO:0007669"/>
    <property type="project" value="UniProtKB-EC"/>
</dbReference>
<dbReference type="GO" id="GO:0036211">
    <property type="term" value="P:protein modification process"/>
    <property type="evidence" value="ECO:0007669"/>
    <property type="project" value="InterPro"/>
</dbReference>
<dbReference type="CDD" id="cd16444">
    <property type="entry name" value="LipB"/>
    <property type="match status" value="1"/>
</dbReference>
<dbReference type="FunFam" id="3.30.930.10:FF:000035">
    <property type="entry name" value="Putative lipoyltransferase 2, mitochondrial"/>
    <property type="match status" value="1"/>
</dbReference>
<dbReference type="Gene3D" id="3.30.930.10">
    <property type="entry name" value="Bira Bifunctional Protein, Domain 2"/>
    <property type="match status" value="1"/>
</dbReference>
<dbReference type="HAMAP" id="MF_00013">
    <property type="entry name" value="LipB"/>
    <property type="match status" value="1"/>
</dbReference>
<dbReference type="InterPro" id="IPR045864">
    <property type="entry name" value="aa-tRNA-synth_II/BPL/LPL"/>
</dbReference>
<dbReference type="InterPro" id="IPR004143">
    <property type="entry name" value="BPL_LPL_catalytic"/>
</dbReference>
<dbReference type="InterPro" id="IPR000544">
    <property type="entry name" value="Octanoyltransferase"/>
</dbReference>
<dbReference type="InterPro" id="IPR020605">
    <property type="entry name" value="Octanoyltransferase_CS"/>
</dbReference>
<dbReference type="NCBIfam" id="TIGR00214">
    <property type="entry name" value="lipB"/>
    <property type="match status" value="1"/>
</dbReference>
<dbReference type="NCBIfam" id="NF010925">
    <property type="entry name" value="PRK14345.1"/>
    <property type="match status" value="1"/>
</dbReference>
<dbReference type="PANTHER" id="PTHR10993:SF7">
    <property type="entry name" value="LIPOYLTRANSFERASE 2, MITOCHONDRIAL-RELATED"/>
    <property type="match status" value="1"/>
</dbReference>
<dbReference type="PANTHER" id="PTHR10993">
    <property type="entry name" value="OCTANOYLTRANSFERASE"/>
    <property type="match status" value="1"/>
</dbReference>
<dbReference type="Pfam" id="PF21948">
    <property type="entry name" value="LplA-B_cat"/>
    <property type="match status" value="1"/>
</dbReference>
<dbReference type="PIRSF" id="PIRSF016262">
    <property type="entry name" value="LPLase"/>
    <property type="match status" value="1"/>
</dbReference>
<dbReference type="SUPFAM" id="SSF55681">
    <property type="entry name" value="Class II aaRS and biotin synthetases"/>
    <property type="match status" value="1"/>
</dbReference>
<dbReference type="PROSITE" id="PS51733">
    <property type="entry name" value="BPL_LPL_CATALYTIC"/>
    <property type="match status" value="1"/>
</dbReference>
<dbReference type="PROSITE" id="PS01313">
    <property type="entry name" value="LIPB"/>
    <property type="match status" value="1"/>
</dbReference>
<accession>A0LTE0</accession>
<proteinExistence type="inferred from homology"/>
<organism>
    <name type="scientific">Acidothermus cellulolyticus (strain ATCC 43068 / DSM 8971 / 11B)</name>
    <dbReference type="NCBI Taxonomy" id="351607"/>
    <lineage>
        <taxon>Bacteria</taxon>
        <taxon>Bacillati</taxon>
        <taxon>Actinomycetota</taxon>
        <taxon>Actinomycetes</taxon>
        <taxon>Acidothermales</taxon>
        <taxon>Acidothermaceae</taxon>
        <taxon>Acidothermus</taxon>
    </lineage>
</organism>
<evidence type="ECO:0000255" key="1">
    <source>
        <dbReference type="HAMAP-Rule" id="MF_00013"/>
    </source>
</evidence>
<evidence type="ECO:0000255" key="2">
    <source>
        <dbReference type="PROSITE-ProRule" id="PRU01067"/>
    </source>
</evidence>
<gene>
    <name evidence="1" type="primary">lipB</name>
    <name type="ordered locus">Acel_0927</name>
</gene>
<feature type="chain" id="PRO_0000321616" description="Octanoyltransferase">
    <location>
        <begin position="1"/>
        <end position="221"/>
    </location>
</feature>
<feature type="domain" description="BPL/LPL catalytic" evidence="2">
    <location>
        <begin position="29"/>
        <end position="208"/>
    </location>
</feature>
<feature type="active site" description="Acyl-thioester intermediate" evidence="1">
    <location>
        <position position="169"/>
    </location>
</feature>
<feature type="binding site" evidence="1">
    <location>
        <begin position="67"/>
        <end position="74"/>
    </location>
    <ligand>
        <name>substrate</name>
    </ligand>
</feature>
<feature type="binding site" evidence="1">
    <location>
        <begin position="138"/>
        <end position="140"/>
    </location>
    <ligand>
        <name>substrate</name>
    </ligand>
</feature>
<feature type="binding site" evidence="1">
    <location>
        <begin position="151"/>
        <end position="153"/>
    </location>
    <ligand>
        <name>substrate</name>
    </ligand>
</feature>
<feature type="site" description="Lowers pKa of active site Cys" evidence="1">
    <location>
        <position position="135"/>
    </location>
</feature>
<protein>
    <recommendedName>
        <fullName evidence="1">Octanoyltransferase</fullName>
        <ecNumber evidence="1">2.3.1.181</ecNumber>
    </recommendedName>
    <alternativeName>
        <fullName evidence="1">Lipoate-protein ligase B</fullName>
    </alternativeName>
    <alternativeName>
        <fullName evidence="1">Lipoyl/octanoyl transferase</fullName>
    </alternativeName>
    <alternativeName>
        <fullName evidence="1">Octanoyl-[acyl-carrier-protein]-protein N-octanoyltransferase</fullName>
    </alternativeName>
</protein>
<reference key="1">
    <citation type="journal article" date="2009" name="Genome Res.">
        <title>Complete genome of the cellulolytic thermophile Acidothermus cellulolyticus 11B provides insights into its ecophysiological and evolutionary adaptations.</title>
        <authorList>
            <person name="Barabote R.D."/>
            <person name="Xie G."/>
            <person name="Leu D.H."/>
            <person name="Normand P."/>
            <person name="Necsulea A."/>
            <person name="Daubin V."/>
            <person name="Medigue C."/>
            <person name="Adney W.S."/>
            <person name="Xu X.C."/>
            <person name="Lapidus A."/>
            <person name="Parales R.E."/>
            <person name="Detter C."/>
            <person name="Pujic P."/>
            <person name="Bruce D."/>
            <person name="Lavire C."/>
            <person name="Challacombe J.F."/>
            <person name="Brettin T.S."/>
            <person name="Berry A.M."/>
        </authorList>
    </citation>
    <scope>NUCLEOTIDE SEQUENCE [LARGE SCALE GENOMIC DNA]</scope>
    <source>
        <strain>ATCC 43068 / DSM 8971 / 11B</strain>
    </source>
</reference>
<name>LIPB_ACIC1</name>